<gene>
    <name evidence="1" type="primary">pgi</name>
    <name type="ordered locus">CF0280</name>
</gene>
<protein>
    <recommendedName>
        <fullName evidence="1">Glucose-6-phosphate isomerase</fullName>
        <shortName evidence="1">GPI</shortName>
        <ecNumber evidence="1">5.3.1.9</ecNumber>
    </recommendedName>
    <alternativeName>
        <fullName evidence="1">Phosphoglucose isomerase</fullName>
        <shortName evidence="1">PGI</shortName>
    </alternativeName>
    <alternativeName>
        <fullName evidence="1">Phosphohexose isomerase</fullName>
        <shortName evidence="1">PHI</shortName>
    </alternativeName>
</protein>
<organism>
    <name type="scientific">Chlamydia felis (strain Fe/C-56)</name>
    <name type="common">Chlamydophila felis</name>
    <dbReference type="NCBI Taxonomy" id="264202"/>
    <lineage>
        <taxon>Bacteria</taxon>
        <taxon>Pseudomonadati</taxon>
        <taxon>Chlamydiota</taxon>
        <taxon>Chlamydiia</taxon>
        <taxon>Chlamydiales</taxon>
        <taxon>Chlamydiaceae</taxon>
        <taxon>Chlamydia/Chlamydophila group</taxon>
        <taxon>Chlamydia</taxon>
    </lineage>
</organism>
<evidence type="ECO:0000255" key="1">
    <source>
        <dbReference type="HAMAP-Rule" id="MF_00473"/>
    </source>
</evidence>
<accession>Q255I6</accession>
<comment type="function">
    <text evidence="1">Catalyzes the reversible isomerization of glucose-6-phosphate to fructose-6-phosphate.</text>
</comment>
<comment type="catalytic activity">
    <reaction evidence="1">
        <text>alpha-D-glucose 6-phosphate = beta-D-fructose 6-phosphate</text>
        <dbReference type="Rhea" id="RHEA:11816"/>
        <dbReference type="ChEBI" id="CHEBI:57634"/>
        <dbReference type="ChEBI" id="CHEBI:58225"/>
        <dbReference type="EC" id="5.3.1.9"/>
    </reaction>
</comment>
<comment type="pathway">
    <text evidence="1">Carbohydrate biosynthesis; gluconeogenesis.</text>
</comment>
<comment type="pathway">
    <text evidence="1">Carbohydrate degradation; glycolysis; D-glyceraldehyde 3-phosphate and glycerone phosphate from D-glucose: step 2/4.</text>
</comment>
<comment type="subcellular location">
    <subcellularLocation>
        <location evidence="1">Cytoplasm</location>
    </subcellularLocation>
</comment>
<comment type="similarity">
    <text evidence="1">Belongs to the GPI family.</text>
</comment>
<sequence>MNGKSFLDSSSTKILQDLAVAPIDLTSPGIISKERIERFSLFVEGFTFSYAMERVDDGILSALTGLASERGLLASMKAMQNGEVVNYIDNFPSESRPALHTATRAWVRGISLTGNAEDISLRSKIEVQRLRDFLNKYRDAFTTIVQIGIGGSELGPKALHCALKGCCPSDKKVYFVSNVDPDNAAEVLQEIDCSKTLVVTVSKSGTTLETAVNEELFADHFLKQGLSFRDHFIAVTCEGSPMDDTTRYLEVFHIWDSIGGRFSSTSMVGGVVLGFAYGFDAFIQLLEGAAAMDLVALEPHMSENLPMLSAMLGIWNRNFLRYPTTAVIPYSMGLEYFPAHLQQCGMESNGKSVAQTGELIGFSTSPILWGELGTNSQHSFFQALHQGSDIVPVEFIGFLRNQRGRDIEISGSSSSQKLFANMIAQSIALAKGRENVNPNKNFKGNRPSSLLVSERLTPYTMGALLAFYEHKIVFQGFCWGINSFDQEGVTLGKDLANQVLRIMQGQQGGDNVVIEAEALLGLFDKNKKLKEFGEA</sequence>
<keyword id="KW-0963">Cytoplasm</keyword>
<keyword id="KW-0312">Gluconeogenesis</keyword>
<keyword id="KW-0324">Glycolysis</keyword>
<keyword id="KW-0413">Isomerase</keyword>
<feature type="chain" id="PRO_0000252614" description="Glucose-6-phosphate isomerase">
    <location>
        <begin position="1"/>
        <end position="535"/>
    </location>
</feature>
<feature type="active site" description="Proton donor" evidence="1">
    <location>
        <position position="347"/>
    </location>
</feature>
<feature type="active site" evidence="1">
    <location>
        <position position="378"/>
    </location>
</feature>
<feature type="active site" evidence="1">
    <location>
        <position position="493"/>
    </location>
</feature>
<proteinExistence type="inferred from homology"/>
<dbReference type="EC" id="5.3.1.9" evidence="1"/>
<dbReference type="EMBL" id="AP006861">
    <property type="protein sequence ID" value="BAE81052.1"/>
    <property type="molecule type" value="Genomic_DNA"/>
</dbReference>
<dbReference type="RefSeq" id="WP_011457833.1">
    <property type="nucleotide sequence ID" value="NC_007899.1"/>
</dbReference>
<dbReference type="SMR" id="Q255I6"/>
<dbReference type="STRING" id="264202.CF0280"/>
<dbReference type="KEGG" id="cfe:CF0280"/>
<dbReference type="eggNOG" id="COG0166">
    <property type="taxonomic scope" value="Bacteria"/>
</dbReference>
<dbReference type="HOGENOM" id="CLU_017947_3_1_0"/>
<dbReference type="OrthoDB" id="140919at2"/>
<dbReference type="UniPathway" id="UPA00109">
    <property type="reaction ID" value="UER00181"/>
</dbReference>
<dbReference type="UniPathway" id="UPA00138"/>
<dbReference type="Proteomes" id="UP000001260">
    <property type="component" value="Chromosome"/>
</dbReference>
<dbReference type="GO" id="GO:0005829">
    <property type="term" value="C:cytosol"/>
    <property type="evidence" value="ECO:0007669"/>
    <property type="project" value="TreeGrafter"/>
</dbReference>
<dbReference type="GO" id="GO:0097367">
    <property type="term" value="F:carbohydrate derivative binding"/>
    <property type="evidence" value="ECO:0007669"/>
    <property type="project" value="InterPro"/>
</dbReference>
<dbReference type="GO" id="GO:0004347">
    <property type="term" value="F:glucose-6-phosphate isomerase activity"/>
    <property type="evidence" value="ECO:0007669"/>
    <property type="project" value="UniProtKB-UniRule"/>
</dbReference>
<dbReference type="GO" id="GO:0048029">
    <property type="term" value="F:monosaccharide binding"/>
    <property type="evidence" value="ECO:0007669"/>
    <property type="project" value="TreeGrafter"/>
</dbReference>
<dbReference type="GO" id="GO:0006094">
    <property type="term" value="P:gluconeogenesis"/>
    <property type="evidence" value="ECO:0007669"/>
    <property type="project" value="UniProtKB-UniRule"/>
</dbReference>
<dbReference type="GO" id="GO:0051156">
    <property type="term" value="P:glucose 6-phosphate metabolic process"/>
    <property type="evidence" value="ECO:0007669"/>
    <property type="project" value="TreeGrafter"/>
</dbReference>
<dbReference type="GO" id="GO:0006096">
    <property type="term" value="P:glycolytic process"/>
    <property type="evidence" value="ECO:0007669"/>
    <property type="project" value="UniProtKB-UniRule"/>
</dbReference>
<dbReference type="CDD" id="cd05015">
    <property type="entry name" value="SIS_PGI_1"/>
    <property type="match status" value="1"/>
</dbReference>
<dbReference type="CDD" id="cd05016">
    <property type="entry name" value="SIS_PGI_2"/>
    <property type="match status" value="1"/>
</dbReference>
<dbReference type="Gene3D" id="1.10.1390.10">
    <property type="match status" value="1"/>
</dbReference>
<dbReference type="Gene3D" id="3.40.50.10490">
    <property type="entry name" value="Glucose-6-phosphate isomerase like protein, domain 1"/>
    <property type="match status" value="2"/>
</dbReference>
<dbReference type="HAMAP" id="MF_00473">
    <property type="entry name" value="G6P_isomerase"/>
    <property type="match status" value="1"/>
</dbReference>
<dbReference type="InterPro" id="IPR001672">
    <property type="entry name" value="G6P_Isomerase"/>
</dbReference>
<dbReference type="InterPro" id="IPR023096">
    <property type="entry name" value="G6P_Isomerase_C"/>
</dbReference>
<dbReference type="InterPro" id="IPR018189">
    <property type="entry name" value="Phosphoglucose_isomerase_CS"/>
</dbReference>
<dbReference type="InterPro" id="IPR046348">
    <property type="entry name" value="SIS_dom_sf"/>
</dbReference>
<dbReference type="InterPro" id="IPR035476">
    <property type="entry name" value="SIS_PGI_1"/>
</dbReference>
<dbReference type="InterPro" id="IPR035482">
    <property type="entry name" value="SIS_PGI_2"/>
</dbReference>
<dbReference type="NCBIfam" id="NF010695">
    <property type="entry name" value="PRK14095.1"/>
    <property type="match status" value="1"/>
</dbReference>
<dbReference type="PANTHER" id="PTHR11469">
    <property type="entry name" value="GLUCOSE-6-PHOSPHATE ISOMERASE"/>
    <property type="match status" value="1"/>
</dbReference>
<dbReference type="PANTHER" id="PTHR11469:SF1">
    <property type="entry name" value="GLUCOSE-6-PHOSPHATE ISOMERASE"/>
    <property type="match status" value="1"/>
</dbReference>
<dbReference type="Pfam" id="PF00342">
    <property type="entry name" value="PGI"/>
    <property type="match status" value="1"/>
</dbReference>
<dbReference type="PRINTS" id="PR00662">
    <property type="entry name" value="G6PISOMERASE"/>
</dbReference>
<dbReference type="SUPFAM" id="SSF53697">
    <property type="entry name" value="SIS domain"/>
    <property type="match status" value="1"/>
</dbReference>
<dbReference type="PROSITE" id="PS00765">
    <property type="entry name" value="P_GLUCOSE_ISOMERASE_1"/>
    <property type="match status" value="1"/>
</dbReference>
<dbReference type="PROSITE" id="PS00174">
    <property type="entry name" value="P_GLUCOSE_ISOMERASE_2"/>
    <property type="match status" value="1"/>
</dbReference>
<dbReference type="PROSITE" id="PS51463">
    <property type="entry name" value="P_GLUCOSE_ISOMERASE_3"/>
    <property type="match status" value="1"/>
</dbReference>
<name>G6PI_CHLFF</name>
<reference key="1">
    <citation type="journal article" date="2006" name="DNA Res.">
        <title>Genome sequence of the cat pathogen, Chlamydophila felis.</title>
        <authorList>
            <person name="Azuma Y."/>
            <person name="Hirakawa H."/>
            <person name="Yamashita A."/>
            <person name="Cai Y."/>
            <person name="Rahman M.A."/>
            <person name="Suzuki H."/>
            <person name="Mitaku S."/>
            <person name="Toh H."/>
            <person name="Goto S."/>
            <person name="Murakami T."/>
            <person name="Sugi K."/>
            <person name="Hayashi H."/>
            <person name="Fukushi H."/>
            <person name="Hattori M."/>
            <person name="Kuhara S."/>
            <person name="Shirai M."/>
        </authorList>
    </citation>
    <scope>NUCLEOTIDE SEQUENCE [LARGE SCALE GENOMIC DNA]</scope>
    <source>
        <strain>Fe/C-56</strain>
    </source>
</reference>